<name>SDHF2_CULQU</name>
<reference key="1">
    <citation type="submission" date="2007-03" db="EMBL/GenBank/DDBJ databases">
        <title>Annotation of Culex pipiens quinquefasciatus.</title>
        <authorList>
            <consortium name="The Broad Institute Genome Sequencing Platform"/>
            <person name="Atkinson P.W."/>
            <person name="Hemingway J."/>
            <person name="Christensen B.M."/>
            <person name="Higgs S."/>
            <person name="Kodira C.D."/>
            <person name="Hannick L.I."/>
            <person name="Megy K."/>
            <person name="O'Leary S.B."/>
            <person name="Pearson M."/>
            <person name="Haas B.J."/>
            <person name="Mauceli E."/>
            <person name="Wortman J.R."/>
            <person name="Lee N.H."/>
            <person name="Guigo R."/>
            <person name="Stanke M."/>
            <person name="Alvarado L."/>
            <person name="Amedeo P."/>
            <person name="Antoine C.H."/>
            <person name="Arensburger P."/>
            <person name="Bidwell S.L."/>
            <person name="Crawford M."/>
            <person name="Camaro F."/>
            <person name="Devon K."/>
            <person name="Engels R."/>
            <person name="Hammond M."/>
            <person name="Howarth C."/>
            <person name="Koehrsen M."/>
            <person name="Lawson D."/>
            <person name="Montgomery P."/>
            <person name="Nene V."/>
            <person name="Nusbaum C."/>
            <person name="Puiu D."/>
            <person name="Romero-Severson J."/>
            <person name="Severson D.W."/>
            <person name="Shumway M."/>
            <person name="Sisk P."/>
            <person name="Stolte C."/>
            <person name="Zeng Q."/>
            <person name="Eisenstadt E."/>
            <person name="Fraser-Liggett C.M."/>
            <person name="Strausberg R."/>
            <person name="Galagan J."/>
            <person name="Birren B."/>
            <person name="Collins F.H."/>
        </authorList>
    </citation>
    <scope>NUCLEOTIDE SEQUENCE [LARGE SCALE GENOMIC DNA]</scope>
    <source>
        <strain>JHB</strain>
    </source>
</reference>
<dbReference type="EMBL" id="DS233727">
    <property type="protein sequence ID" value="EDS31376.1"/>
    <property type="molecule type" value="Genomic_DNA"/>
</dbReference>
<dbReference type="SMR" id="B0XK69"/>
<dbReference type="FunCoup" id="B0XK69">
    <property type="interactions" value="1453"/>
</dbReference>
<dbReference type="STRING" id="7176.B0XK69"/>
<dbReference type="EnsemblMetazoa" id="CPIJ019830-RA">
    <property type="protein sequence ID" value="CPIJ019830-PA"/>
    <property type="gene ID" value="CPIJ019830"/>
</dbReference>
<dbReference type="EnsemblMetazoa" id="CQUJHB010006.R15453">
    <property type="protein sequence ID" value="CQUJHB010006.P15453"/>
    <property type="gene ID" value="CQUJHB010006"/>
</dbReference>
<dbReference type="EnsemblMetazoa" id="XM_001870006.2">
    <property type="protein sequence ID" value="XP_001870041.1"/>
    <property type="gene ID" value="LOC6054062"/>
</dbReference>
<dbReference type="KEGG" id="cqu:CpipJ_CPIJ019830"/>
<dbReference type="VEuPathDB" id="VectorBase:CPIJ019830"/>
<dbReference type="VEuPathDB" id="VectorBase:CQUJHB010006"/>
<dbReference type="eggNOG" id="KOG3326">
    <property type="taxonomic scope" value="Eukaryota"/>
</dbReference>
<dbReference type="HOGENOM" id="CLU_103054_0_2_1"/>
<dbReference type="InParanoid" id="B0XK69"/>
<dbReference type="OMA" id="YGKPQNP"/>
<dbReference type="OrthoDB" id="284292at2759"/>
<dbReference type="PhylomeDB" id="B0XK69"/>
<dbReference type="Proteomes" id="UP000002320">
    <property type="component" value="Unassembled WGS sequence"/>
</dbReference>
<dbReference type="GO" id="GO:0005759">
    <property type="term" value="C:mitochondrial matrix"/>
    <property type="evidence" value="ECO:0007669"/>
    <property type="project" value="UniProtKB-SubCell"/>
</dbReference>
<dbReference type="GO" id="GO:0005739">
    <property type="term" value="C:mitochondrion"/>
    <property type="evidence" value="ECO:0000250"/>
    <property type="project" value="UniProtKB"/>
</dbReference>
<dbReference type="GO" id="GO:0006121">
    <property type="term" value="P:mitochondrial electron transport, succinate to ubiquinone"/>
    <property type="evidence" value="ECO:0000250"/>
    <property type="project" value="UniProtKB"/>
</dbReference>
<dbReference type="GO" id="GO:0034553">
    <property type="term" value="P:mitochondrial respiratory chain complex II assembly"/>
    <property type="evidence" value="ECO:0007669"/>
    <property type="project" value="TreeGrafter"/>
</dbReference>
<dbReference type="GO" id="GO:0018293">
    <property type="term" value="P:protein-FAD linkage"/>
    <property type="evidence" value="ECO:0000250"/>
    <property type="project" value="UniProtKB"/>
</dbReference>
<dbReference type="GO" id="GO:0006099">
    <property type="term" value="P:tricarboxylic acid cycle"/>
    <property type="evidence" value="ECO:0007669"/>
    <property type="project" value="TreeGrafter"/>
</dbReference>
<dbReference type="FunFam" id="1.10.150.250:FF:000002">
    <property type="entry name" value="Succinate dehydrogenase assembly factor 2, mitochondrial"/>
    <property type="match status" value="1"/>
</dbReference>
<dbReference type="Gene3D" id="1.10.150.250">
    <property type="entry name" value="Flavinator of succinate dehydrogenase"/>
    <property type="match status" value="1"/>
</dbReference>
<dbReference type="HAMAP" id="MF_03057">
    <property type="entry name" value="SDHAF2"/>
    <property type="match status" value="1"/>
</dbReference>
<dbReference type="InterPro" id="IPR005631">
    <property type="entry name" value="SDH"/>
</dbReference>
<dbReference type="InterPro" id="IPR036714">
    <property type="entry name" value="SDH_sf"/>
</dbReference>
<dbReference type="InterPro" id="IPR028882">
    <property type="entry name" value="SDHAF2"/>
</dbReference>
<dbReference type="PANTHER" id="PTHR12469">
    <property type="entry name" value="PROTEIN EMI5 HOMOLOG, MITOCHONDRIAL"/>
    <property type="match status" value="1"/>
</dbReference>
<dbReference type="PANTHER" id="PTHR12469:SF2">
    <property type="entry name" value="SUCCINATE DEHYDROGENASE ASSEMBLY FACTOR 2, MITOCHONDRIAL"/>
    <property type="match status" value="1"/>
</dbReference>
<dbReference type="Pfam" id="PF03937">
    <property type="entry name" value="Sdh5"/>
    <property type="match status" value="1"/>
</dbReference>
<dbReference type="SUPFAM" id="SSF109910">
    <property type="entry name" value="YgfY-like"/>
    <property type="match status" value="1"/>
</dbReference>
<feature type="transit peptide" description="Mitochondrion" evidence="1">
    <location>
        <begin position="1"/>
        <end position="14"/>
    </location>
</feature>
<feature type="chain" id="PRO_0000383161" description="Succinate dehydrogenase assembly factor 2, mitochondrial">
    <location>
        <begin position="15"/>
        <end position="159"/>
    </location>
</feature>
<keyword id="KW-0143">Chaperone</keyword>
<keyword id="KW-0496">Mitochondrion</keyword>
<keyword id="KW-1185">Reference proteome</keyword>
<keyword id="KW-0809">Transit peptide</keyword>
<protein>
    <recommendedName>
        <fullName evidence="1">Succinate dehydrogenase assembly factor 2, mitochondrial</fullName>
        <shortName evidence="1">SDH assembly factor 2</shortName>
        <shortName evidence="1">SDHAF2</shortName>
    </recommendedName>
</protein>
<gene>
    <name type="ORF">CPIJ019830</name>
</gene>
<accession>B0XK69</accession>
<comment type="function">
    <text evidence="1">Plays an essential role in the assembly of succinate dehydrogenase (SDH), an enzyme complex (also referred to as respiratory complex II) that is a component of both the tricarboxylic acid (TCA) cycle and the mitochondrial electron transport chain, and which couples the oxidation of succinate to fumarate with the reduction of ubiquinone (coenzyme Q) to ubiquinol. Required for flavinylation (covalent attachment of FAD) of the flavoprotein subunit of the SDH catalytic dimer.</text>
</comment>
<comment type="subunit">
    <text evidence="1">Interacts with the flavoprotein subunit within the SDH catalytic dimer.</text>
</comment>
<comment type="subcellular location">
    <subcellularLocation>
        <location evidence="1">Mitochondrion matrix</location>
    </subcellularLocation>
</comment>
<comment type="similarity">
    <text evidence="1">Belongs to the SDHAF2 family.</text>
</comment>
<proteinExistence type="inferred from homology"/>
<sequence length="159" mass="18213">MASFCLSRCCALRGSTAVGWSLRTIGTSRVSLAGEGERPPPMIDLEDKSLPIPIYKEKHNEPLKLQKSRLLYQSRKRGMLENGLLLSTFAAKYLESLDARQTKLYDTLINMPTNDWDIFYWATGVKPTPQEYDNEIMNMLKEHVKNANKEKRLCQPALY</sequence>
<evidence type="ECO:0000255" key="1">
    <source>
        <dbReference type="HAMAP-Rule" id="MF_03057"/>
    </source>
</evidence>
<organism>
    <name type="scientific">Culex quinquefasciatus</name>
    <name type="common">Southern house mosquito</name>
    <name type="synonym">Culex pungens</name>
    <dbReference type="NCBI Taxonomy" id="7176"/>
    <lineage>
        <taxon>Eukaryota</taxon>
        <taxon>Metazoa</taxon>
        <taxon>Ecdysozoa</taxon>
        <taxon>Arthropoda</taxon>
        <taxon>Hexapoda</taxon>
        <taxon>Insecta</taxon>
        <taxon>Pterygota</taxon>
        <taxon>Neoptera</taxon>
        <taxon>Endopterygota</taxon>
        <taxon>Diptera</taxon>
        <taxon>Nematocera</taxon>
        <taxon>Culicoidea</taxon>
        <taxon>Culicidae</taxon>
        <taxon>Culicinae</taxon>
        <taxon>Culicini</taxon>
        <taxon>Culex</taxon>
        <taxon>Culex</taxon>
    </lineage>
</organism>